<feature type="chain" id="PRO_0000419855" description="Turripeptide OL22">
    <location>
        <begin position="1"/>
        <end position="114"/>
    </location>
</feature>
<feature type="sequence variant" description="In OL78." evidence="2">
    <original>Q</original>
    <variation>E</variation>
    <location>
        <position position="23"/>
    </location>
</feature>
<feature type="sequence variant" description="In OL78." evidence="2">
    <original>D</original>
    <variation>E</variation>
    <location>
        <position position="48"/>
    </location>
</feature>
<comment type="function">
    <text evidence="1">Acts as a neurotoxin by inhibiting an ion channel.</text>
</comment>
<comment type="subcellular location">
    <subcellularLocation>
        <location evidence="1">Secreted</location>
    </subcellularLocation>
</comment>
<comment type="tissue specificity">
    <text>Expressed by the venom duct.</text>
</comment>
<comment type="domain">
    <text>The cysteine framework is C-C-C-C-C-C-C-C-C-C-CC.</text>
</comment>
<comment type="PTM">
    <text evidence="1">Contains 6 disulfide bonds.</text>
</comment>
<sequence>TSCETHQICGRKIIYRDGTTNTQEIDYCRCSGDTDCPKDDVNEISFVDWSYWEVSYYTCLTQAGNYHYCNEGAAVQPGAGPIIYRQNNVEHPYKMNCRCNPCWINKARCCTPGT</sequence>
<name>TU22_IOTOL</name>
<protein>
    <recommendedName>
        <fullName>Turripeptide OL22</fullName>
    </recommendedName>
    <alternativeName>
        <fullName>Turripeptide OL78</fullName>
    </alternativeName>
</protein>
<reference key="1">
    <citation type="journal article" date="2006" name="J. Mol. Evol.">
        <title>Genes expressed in a turrid venom duct: divergence and similarity to conotoxins.</title>
        <authorList>
            <person name="Watkins M."/>
            <person name="Hillyard D.R."/>
            <person name="Olivera B.M."/>
        </authorList>
    </citation>
    <scope>NUCLEOTIDE SEQUENCE [MRNA]</scope>
    <scope>VARIANTS GLU-23 AND GLU-48</scope>
    <source>
        <tissue>Venom duct</tissue>
    </source>
</reference>
<dbReference type="GO" id="GO:0005576">
    <property type="term" value="C:extracellular region"/>
    <property type="evidence" value="ECO:0007669"/>
    <property type="project" value="UniProtKB-SubCell"/>
</dbReference>
<dbReference type="GO" id="GO:0099106">
    <property type="term" value="F:ion channel regulator activity"/>
    <property type="evidence" value="ECO:0007669"/>
    <property type="project" value="UniProtKB-KW"/>
</dbReference>
<dbReference type="GO" id="GO:0090729">
    <property type="term" value="F:toxin activity"/>
    <property type="evidence" value="ECO:0007669"/>
    <property type="project" value="UniProtKB-KW"/>
</dbReference>
<accession>P0DKN9</accession>
<evidence type="ECO:0000250" key="1"/>
<evidence type="ECO:0000269" key="2">
    <source>
    </source>
</evidence>
<proteinExistence type="evidence at transcript level"/>
<keyword id="KW-1015">Disulfide bond</keyword>
<keyword id="KW-0872">Ion channel impairing toxin</keyword>
<keyword id="KW-0528">Neurotoxin</keyword>
<keyword id="KW-0964">Secreted</keyword>
<keyword id="KW-0800">Toxin</keyword>
<organism>
    <name type="scientific">Iotyrris olangoensis</name>
    <name type="common">Sea snail</name>
    <name type="synonym">Lophiotoma olangoensis</name>
    <dbReference type="NCBI Taxonomy" id="2420066"/>
    <lineage>
        <taxon>Eukaryota</taxon>
        <taxon>Metazoa</taxon>
        <taxon>Spiralia</taxon>
        <taxon>Lophotrochozoa</taxon>
        <taxon>Mollusca</taxon>
        <taxon>Gastropoda</taxon>
        <taxon>Caenogastropoda</taxon>
        <taxon>Neogastropoda</taxon>
        <taxon>Conoidea</taxon>
        <taxon>Turridae</taxon>
        <taxon>Iotyrris</taxon>
    </lineage>
</organism>